<protein>
    <recommendedName>
        <fullName evidence="1">Large ribosomal subunit protein bL20c</fullName>
    </recommendedName>
    <alternativeName>
        <fullName evidence="2">50S ribosomal protein L20, chloroplastic</fullName>
    </alternativeName>
</protein>
<gene>
    <name evidence="1" type="primary">rpl20</name>
    <name type="ordered locus">LopeCp064</name>
</gene>
<name>RK20_LOLPR</name>
<proteinExistence type="inferred from homology"/>
<comment type="function">
    <text evidence="1">Binds directly to 23S ribosomal RNA and is necessary for the in vitro assembly process of the 50S ribosomal subunit. It is not involved in the protein synthesizing functions of that subunit.</text>
</comment>
<comment type="subcellular location">
    <subcellularLocation>
        <location>Plastid</location>
        <location>Chloroplast</location>
    </subcellularLocation>
</comment>
<comment type="similarity">
    <text evidence="1">Belongs to the bacterial ribosomal protein bL20 family.</text>
</comment>
<feature type="chain" id="PRO_0000355513" description="Large ribosomal subunit protein bL20c">
    <location>
        <begin position="1"/>
        <end position="119"/>
    </location>
</feature>
<reference key="1">
    <citation type="journal article" date="2008" name="PLoS ONE">
        <title>An optimized chloroplast DNA extraction protocol for grasses (Poaceae) proves suitable for whole plastid genome sequencing and SNP detection.</title>
        <authorList>
            <person name="Diekmann K."/>
            <person name="Hodkinson T.R."/>
            <person name="Fricke E."/>
            <person name="Barth S."/>
        </authorList>
    </citation>
    <scope>NUCLEOTIDE SEQUENCE [LARGE SCALE GENOMIC DNA]</scope>
    <source>
        <strain>cv. Cashel</strain>
    </source>
</reference>
<accession>A8Y9A9</accession>
<sequence length="119" mass="14320">MTRVPRGYIARRRRTKMRSFASNFRGAHLRLNRMITQQVKRAFVSSHRDRGRQKRDFRRLWITRINAATRIYKVFDSYSKLIHNLYKKKLILNRKMLAQVAVSNPNNLYTISNKIKIIN</sequence>
<dbReference type="EMBL" id="AM777385">
    <property type="protein sequence ID" value="CAO85998.1"/>
    <property type="molecule type" value="Genomic_DNA"/>
</dbReference>
<dbReference type="RefSeq" id="YP_001531305.1">
    <property type="nucleotide sequence ID" value="NC_009950.1"/>
</dbReference>
<dbReference type="SMR" id="A8Y9A9"/>
<dbReference type="GeneID" id="5696639"/>
<dbReference type="KEGG" id="lper:5696639"/>
<dbReference type="GO" id="GO:0009507">
    <property type="term" value="C:chloroplast"/>
    <property type="evidence" value="ECO:0007669"/>
    <property type="project" value="UniProtKB-SubCell"/>
</dbReference>
<dbReference type="GO" id="GO:1990904">
    <property type="term" value="C:ribonucleoprotein complex"/>
    <property type="evidence" value="ECO:0007669"/>
    <property type="project" value="UniProtKB-KW"/>
</dbReference>
<dbReference type="GO" id="GO:0005840">
    <property type="term" value="C:ribosome"/>
    <property type="evidence" value="ECO:0007669"/>
    <property type="project" value="UniProtKB-KW"/>
</dbReference>
<dbReference type="GO" id="GO:0019843">
    <property type="term" value="F:rRNA binding"/>
    <property type="evidence" value="ECO:0007669"/>
    <property type="project" value="UniProtKB-UniRule"/>
</dbReference>
<dbReference type="GO" id="GO:0003735">
    <property type="term" value="F:structural constituent of ribosome"/>
    <property type="evidence" value="ECO:0007669"/>
    <property type="project" value="InterPro"/>
</dbReference>
<dbReference type="GO" id="GO:0000027">
    <property type="term" value="P:ribosomal large subunit assembly"/>
    <property type="evidence" value="ECO:0007669"/>
    <property type="project" value="UniProtKB-UniRule"/>
</dbReference>
<dbReference type="GO" id="GO:0006412">
    <property type="term" value="P:translation"/>
    <property type="evidence" value="ECO:0007669"/>
    <property type="project" value="InterPro"/>
</dbReference>
<dbReference type="CDD" id="cd07026">
    <property type="entry name" value="Ribosomal_L20"/>
    <property type="match status" value="1"/>
</dbReference>
<dbReference type="FunFam" id="1.10.1900.20:FF:000002">
    <property type="entry name" value="50S ribosomal protein L20, chloroplastic"/>
    <property type="match status" value="1"/>
</dbReference>
<dbReference type="Gene3D" id="6.10.160.10">
    <property type="match status" value="1"/>
</dbReference>
<dbReference type="Gene3D" id="1.10.1900.20">
    <property type="entry name" value="Ribosomal protein L20"/>
    <property type="match status" value="1"/>
</dbReference>
<dbReference type="HAMAP" id="MF_00382">
    <property type="entry name" value="Ribosomal_bL20"/>
    <property type="match status" value="1"/>
</dbReference>
<dbReference type="InterPro" id="IPR005813">
    <property type="entry name" value="Ribosomal_bL20"/>
</dbReference>
<dbReference type="InterPro" id="IPR049946">
    <property type="entry name" value="RIBOSOMAL_L20_CS"/>
</dbReference>
<dbReference type="InterPro" id="IPR035566">
    <property type="entry name" value="Ribosomal_protein_bL20_C"/>
</dbReference>
<dbReference type="NCBIfam" id="TIGR01032">
    <property type="entry name" value="rplT_bact"/>
    <property type="match status" value="1"/>
</dbReference>
<dbReference type="PANTHER" id="PTHR10986">
    <property type="entry name" value="39S RIBOSOMAL PROTEIN L20"/>
    <property type="match status" value="1"/>
</dbReference>
<dbReference type="Pfam" id="PF00453">
    <property type="entry name" value="Ribosomal_L20"/>
    <property type="match status" value="1"/>
</dbReference>
<dbReference type="PRINTS" id="PR00062">
    <property type="entry name" value="RIBOSOMALL20"/>
</dbReference>
<dbReference type="SUPFAM" id="SSF74731">
    <property type="entry name" value="Ribosomal protein L20"/>
    <property type="match status" value="1"/>
</dbReference>
<dbReference type="PROSITE" id="PS00937">
    <property type="entry name" value="RIBOSOMAL_L20"/>
    <property type="match status" value="1"/>
</dbReference>
<keyword id="KW-0150">Chloroplast</keyword>
<keyword id="KW-0934">Plastid</keyword>
<keyword id="KW-0687">Ribonucleoprotein</keyword>
<keyword id="KW-0689">Ribosomal protein</keyword>
<keyword id="KW-0694">RNA-binding</keyword>
<keyword id="KW-0699">rRNA-binding</keyword>
<evidence type="ECO:0000255" key="1">
    <source>
        <dbReference type="HAMAP-Rule" id="MF_00382"/>
    </source>
</evidence>
<evidence type="ECO:0000305" key="2"/>
<organism>
    <name type="scientific">Lolium perenne</name>
    <name type="common">Perennial ryegrass</name>
    <dbReference type="NCBI Taxonomy" id="4522"/>
    <lineage>
        <taxon>Eukaryota</taxon>
        <taxon>Viridiplantae</taxon>
        <taxon>Streptophyta</taxon>
        <taxon>Embryophyta</taxon>
        <taxon>Tracheophyta</taxon>
        <taxon>Spermatophyta</taxon>
        <taxon>Magnoliopsida</taxon>
        <taxon>Liliopsida</taxon>
        <taxon>Poales</taxon>
        <taxon>Poaceae</taxon>
        <taxon>BOP clade</taxon>
        <taxon>Pooideae</taxon>
        <taxon>Poodae</taxon>
        <taxon>Poeae</taxon>
        <taxon>Poeae Chloroplast Group 2 (Poeae type)</taxon>
        <taxon>Loliodinae</taxon>
        <taxon>Loliinae</taxon>
        <taxon>Lolium</taxon>
    </lineage>
</organism>
<geneLocation type="chloroplast"/>